<dbReference type="EC" id="7.1.1.9"/>
<dbReference type="EMBL" id="AY331082">
    <property type="protein sequence ID" value="AAR02583.1"/>
    <property type="molecule type" value="Genomic_DNA"/>
</dbReference>
<dbReference type="EMBL" id="AY331083">
    <property type="protein sequence ID" value="AAR02584.1"/>
    <property type="molecule type" value="Genomic_DNA"/>
</dbReference>
<dbReference type="SMR" id="Q6EGI2"/>
<dbReference type="UniPathway" id="UPA00705"/>
<dbReference type="GO" id="GO:0005743">
    <property type="term" value="C:mitochondrial inner membrane"/>
    <property type="evidence" value="ECO:0007669"/>
    <property type="project" value="UniProtKB-SubCell"/>
</dbReference>
<dbReference type="GO" id="GO:0045277">
    <property type="term" value="C:respiratory chain complex IV"/>
    <property type="evidence" value="ECO:0000250"/>
    <property type="project" value="UniProtKB"/>
</dbReference>
<dbReference type="GO" id="GO:0004129">
    <property type="term" value="F:cytochrome-c oxidase activity"/>
    <property type="evidence" value="ECO:0007669"/>
    <property type="project" value="UniProtKB-EC"/>
</dbReference>
<dbReference type="GO" id="GO:0020037">
    <property type="term" value="F:heme binding"/>
    <property type="evidence" value="ECO:0007669"/>
    <property type="project" value="InterPro"/>
</dbReference>
<dbReference type="GO" id="GO:0046872">
    <property type="term" value="F:metal ion binding"/>
    <property type="evidence" value="ECO:0007669"/>
    <property type="project" value="UniProtKB-KW"/>
</dbReference>
<dbReference type="GO" id="GO:0015990">
    <property type="term" value="P:electron transport coupled proton transport"/>
    <property type="evidence" value="ECO:0007669"/>
    <property type="project" value="TreeGrafter"/>
</dbReference>
<dbReference type="GO" id="GO:0006123">
    <property type="term" value="P:mitochondrial electron transport, cytochrome c to oxygen"/>
    <property type="evidence" value="ECO:0007669"/>
    <property type="project" value="TreeGrafter"/>
</dbReference>
<dbReference type="CDD" id="cd01663">
    <property type="entry name" value="Cyt_c_Oxidase_I"/>
    <property type="match status" value="1"/>
</dbReference>
<dbReference type="FunFam" id="1.20.210.10:FF:000001">
    <property type="entry name" value="Cytochrome c oxidase subunit 1"/>
    <property type="match status" value="1"/>
</dbReference>
<dbReference type="Gene3D" id="1.20.210.10">
    <property type="entry name" value="Cytochrome c oxidase-like, subunit I domain"/>
    <property type="match status" value="1"/>
</dbReference>
<dbReference type="InterPro" id="IPR023616">
    <property type="entry name" value="Cyt_c_oxase-like_su1_dom"/>
</dbReference>
<dbReference type="InterPro" id="IPR036927">
    <property type="entry name" value="Cyt_c_oxase-like_su1_sf"/>
</dbReference>
<dbReference type="InterPro" id="IPR000883">
    <property type="entry name" value="Cyt_C_Oxase_1"/>
</dbReference>
<dbReference type="InterPro" id="IPR023615">
    <property type="entry name" value="Cyt_c_Oxase_su1_BS"/>
</dbReference>
<dbReference type="InterPro" id="IPR033944">
    <property type="entry name" value="Cyt_c_oxase_su1_dom"/>
</dbReference>
<dbReference type="PANTHER" id="PTHR10422">
    <property type="entry name" value="CYTOCHROME C OXIDASE SUBUNIT 1"/>
    <property type="match status" value="1"/>
</dbReference>
<dbReference type="PANTHER" id="PTHR10422:SF18">
    <property type="entry name" value="CYTOCHROME C OXIDASE SUBUNIT 1"/>
    <property type="match status" value="1"/>
</dbReference>
<dbReference type="Pfam" id="PF00115">
    <property type="entry name" value="COX1"/>
    <property type="match status" value="1"/>
</dbReference>
<dbReference type="PRINTS" id="PR01165">
    <property type="entry name" value="CYCOXIDASEI"/>
</dbReference>
<dbReference type="SUPFAM" id="SSF81442">
    <property type="entry name" value="Cytochrome c oxidase subunit I-like"/>
    <property type="match status" value="1"/>
</dbReference>
<dbReference type="PROSITE" id="PS50855">
    <property type="entry name" value="COX1"/>
    <property type="match status" value="1"/>
</dbReference>
<dbReference type="PROSITE" id="PS00077">
    <property type="entry name" value="COX1_CUB"/>
    <property type="match status" value="1"/>
</dbReference>
<gene>
    <name type="primary">MT-CO1</name>
    <name type="synonym">COI</name>
    <name type="synonym">COXI</name>
    <name type="synonym">MTCO1</name>
</gene>
<feature type="chain" id="PRO_0000254910" description="Cytochrome c oxidase subunit 1">
    <location>
        <begin position="1"/>
        <end position="514"/>
    </location>
</feature>
<feature type="topological domain" description="Mitochondrial matrix" evidence="2">
    <location>
        <begin position="1"/>
        <end position="11"/>
    </location>
</feature>
<feature type="transmembrane region" description="Helical; Name=I" evidence="2">
    <location>
        <begin position="12"/>
        <end position="40"/>
    </location>
</feature>
<feature type="topological domain" description="Mitochondrial intermembrane" evidence="2">
    <location>
        <begin position="41"/>
        <end position="50"/>
    </location>
</feature>
<feature type="transmembrane region" description="Helical; Name=II" evidence="2">
    <location>
        <begin position="51"/>
        <end position="86"/>
    </location>
</feature>
<feature type="topological domain" description="Mitochondrial matrix" evidence="2">
    <location>
        <begin position="87"/>
        <end position="94"/>
    </location>
</feature>
<feature type="transmembrane region" description="Helical; Name=III" evidence="2">
    <location>
        <begin position="95"/>
        <end position="117"/>
    </location>
</feature>
<feature type="topological domain" description="Mitochondrial intermembrane" evidence="2">
    <location>
        <begin position="118"/>
        <end position="140"/>
    </location>
</feature>
<feature type="transmembrane region" description="Helical; Name=IV" evidence="2">
    <location>
        <begin position="141"/>
        <end position="170"/>
    </location>
</feature>
<feature type="topological domain" description="Mitochondrial matrix" evidence="2">
    <location>
        <begin position="171"/>
        <end position="182"/>
    </location>
</feature>
<feature type="transmembrane region" description="Helical; Name=V" evidence="2">
    <location>
        <begin position="183"/>
        <end position="212"/>
    </location>
</feature>
<feature type="topological domain" description="Mitochondrial intermembrane" evidence="2">
    <location>
        <begin position="213"/>
        <end position="227"/>
    </location>
</feature>
<feature type="transmembrane region" description="Helical; Name=VI" evidence="2">
    <location>
        <begin position="228"/>
        <end position="261"/>
    </location>
</feature>
<feature type="topological domain" description="Mitochondrial matrix" evidence="2">
    <location>
        <begin position="262"/>
        <end position="269"/>
    </location>
</feature>
<feature type="transmembrane region" description="Helical; Name=VII" evidence="2">
    <location>
        <begin position="270"/>
        <end position="286"/>
    </location>
</feature>
<feature type="topological domain" description="Mitochondrial intermembrane" evidence="2">
    <location>
        <begin position="287"/>
        <end position="298"/>
    </location>
</feature>
<feature type="transmembrane region" description="Helical; Name=VIII" evidence="2">
    <location>
        <begin position="299"/>
        <end position="327"/>
    </location>
</feature>
<feature type="topological domain" description="Mitochondrial matrix" evidence="2">
    <location>
        <begin position="328"/>
        <end position="335"/>
    </location>
</feature>
<feature type="transmembrane region" description="Helical; Name=IX" evidence="2">
    <location>
        <begin position="336"/>
        <end position="357"/>
    </location>
</feature>
<feature type="topological domain" description="Mitochondrial intermembrane" evidence="2">
    <location>
        <begin position="358"/>
        <end position="370"/>
    </location>
</feature>
<feature type="transmembrane region" description="Helical; Name=X" evidence="2">
    <location>
        <begin position="371"/>
        <end position="400"/>
    </location>
</feature>
<feature type="topological domain" description="Mitochondrial matrix" evidence="2">
    <location>
        <begin position="401"/>
        <end position="406"/>
    </location>
</feature>
<feature type="transmembrane region" description="Helical; Name=XI" evidence="2">
    <location>
        <begin position="407"/>
        <end position="433"/>
    </location>
</feature>
<feature type="topological domain" description="Mitochondrial intermembrane" evidence="2">
    <location>
        <begin position="434"/>
        <end position="446"/>
    </location>
</feature>
<feature type="transmembrane region" description="Helical; Name=XII" evidence="2">
    <location>
        <begin position="447"/>
        <end position="478"/>
    </location>
</feature>
<feature type="topological domain" description="Mitochondrial matrix" evidence="2">
    <location>
        <begin position="479"/>
        <end position="514"/>
    </location>
</feature>
<feature type="binding site" evidence="2">
    <location>
        <position position="40"/>
    </location>
    <ligand>
        <name>Na(+)</name>
        <dbReference type="ChEBI" id="CHEBI:29101"/>
    </ligand>
</feature>
<feature type="binding site" evidence="2">
    <location>
        <position position="45"/>
    </location>
    <ligand>
        <name>Na(+)</name>
        <dbReference type="ChEBI" id="CHEBI:29101"/>
    </ligand>
</feature>
<feature type="binding site" description="axial binding residue" evidence="2">
    <location>
        <position position="61"/>
    </location>
    <ligand>
        <name>Fe(II)-heme a</name>
        <dbReference type="ChEBI" id="CHEBI:61715"/>
        <note>low-spin</note>
    </ligand>
    <ligandPart>
        <name>Fe</name>
        <dbReference type="ChEBI" id="CHEBI:18248"/>
    </ligandPart>
</feature>
<feature type="binding site" evidence="2">
    <location>
        <position position="240"/>
    </location>
    <ligand>
        <name>Cu cation</name>
        <dbReference type="ChEBI" id="CHEBI:23378"/>
        <label>B</label>
    </ligand>
</feature>
<feature type="binding site" evidence="2">
    <location>
        <position position="244"/>
    </location>
    <ligand>
        <name>O2</name>
        <dbReference type="ChEBI" id="CHEBI:15379"/>
    </ligand>
</feature>
<feature type="binding site" evidence="2">
    <location>
        <position position="290"/>
    </location>
    <ligand>
        <name>Cu cation</name>
        <dbReference type="ChEBI" id="CHEBI:23378"/>
        <label>B</label>
    </ligand>
</feature>
<feature type="binding site" evidence="2">
    <location>
        <position position="291"/>
    </location>
    <ligand>
        <name>Cu cation</name>
        <dbReference type="ChEBI" id="CHEBI:23378"/>
        <label>B</label>
    </ligand>
</feature>
<feature type="binding site" evidence="2">
    <location>
        <position position="368"/>
    </location>
    <ligand>
        <name>Mg(2+)</name>
        <dbReference type="ChEBI" id="CHEBI:18420"/>
        <note>ligand shared with MT-CO2</note>
    </ligand>
</feature>
<feature type="binding site" evidence="2">
    <location>
        <position position="369"/>
    </location>
    <ligand>
        <name>Mg(2+)</name>
        <dbReference type="ChEBI" id="CHEBI:18420"/>
        <note>ligand shared with MT-CO2</note>
    </ligand>
</feature>
<feature type="binding site" description="axial binding residue" evidence="2">
    <location>
        <position position="376"/>
    </location>
    <ligand>
        <name>heme a3</name>
        <dbReference type="ChEBI" id="CHEBI:83282"/>
        <note>high-spin</note>
    </ligand>
    <ligandPart>
        <name>Fe</name>
        <dbReference type="ChEBI" id="CHEBI:18248"/>
    </ligandPart>
</feature>
<feature type="binding site" description="axial binding residue" evidence="2">
    <location>
        <position position="378"/>
    </location>
    <ligand>
        <name>Fe(II)-heme a</name>
        <dbReference type="ChEBI" id="CHEBI:61715"/>
        <note>low-spin</note>
    </ligand>
    <ligandPart>
        <name>Fe</name>
        <dbReference type="ChEBI" id="CHEBI:18248"/>
    </ligandPart>
</feature>
<feature type="binding site" evidence="2">
    <location>
        <position position="441"/>
    </location>
    <ligand>
        <name>Na(+)</name>
        <dbReference type="ChEBI" id="CHEBI:29101"/>
    </ligand>
</feature>
<feature type="cross-link" description="1'-histidyl-3'-tyrosine (His-Tyr)" evidence="2">
    <location>
        <begin position="240"/>
        <end position="244"/>
    </location>
</feature>
<feature type="sequence variant" description="In strain: Isolate LSUMZ M-3076.">
    <original>V</original>
    <variation>I</variation>
    <location>
        <position position="3"/>
    </location>
</feature>
<feature type="sequence variant" description="In strain: Isolate LSUMZ M-3076.">
    <original>T</original>
    <variation>A</variation>
    <location>
        <position position="514"/>
    </location>
</feature>
<keyword id="KW-0106">Calcium</keyword>
<keyword id="KW-0186">Copper</keyword>
<keyword id="KW-0249">Electron transport</keyword>
<keyword id="KW-0349">Heme</keyword>
<keyword id="KW-0408">Iron</keyword>
<keyword id="KW-0460">Magnesium</keyword>
<keyword id="KW-0472">Membrane</keyword>
<keyword id="KW-0479">Metal-binding</keyword>
<keyword id="KW-0496">Mitochondrion</keyword>
<keyword id="KW-0999">Mitochondrion inner membrane</keyword>
<keyword id="KW-0679">Respiratory chain</keyword>
<keyword id="KW-0915">Sodium</keyword>
<keyword id="KW-1278">Translocase</keyword>
<keyword id="KW-0812">Transmembrane</keyword>
<keyword id="KW-1133">Transmembrane helix</keyword>
<keyword id="KW-0813">Transport</keyword>
<evidence type="ECO:0000250" key="1">
    <source>
        <dbReference type="UniProtKB" id="P00395"/>
    </source>
</evidence>
<evidence type="ECO:0000250" key="2">
    <source>
        <dbReference type="UniProtKB" id="P00396"/>
    </source>
</evidence>
<evidence type="ECO:0000250" key="3">
    <source>
        <dbReference type="UniProtKB" id="P00401"/>
    </source>
</evidence>
<evidence type="ECO:0000305" key="4"/>
<name>COX1_ORTGR</name>
<organism>
    <name type="scientific">Orthogeomys grandis</name>
    <name type="common">Giant pocket gopher</name>
    <dbReference type="NCBI Taxonomy" id="249182"/>
    <lineage>
        <taxon>Eukaryota</taxon>
        <taxon>Metazoa</taxon>
        <taxon>Chordata</taxon>
        <taxon>Craniata</taxon>
        <taxon>Vertebrata</taxon>
        <taxon>Euteleostomi</taxon>
        <taxon>Mammalia</taxon>
        <taxon>Eutheria</taxon>
        <taxon>Euarchontoglires</taxon>
        <taxon>Glires</taxon>
        <taxon>Rodentia</taxon>
        <taxon>Castorimorpha</taxon>
        <taxon>Geomyidae</taxon>
        <taxon>Orthogeomys</taxon>
    </lineage>
</organism>
<accession>Q6EGI2</accession>
<accession>Q6EGI1</accession>
<sequence>MFVNRWLFSTNHKDIGTLYMIFGAWAGMVGTGLSILIRAELGQPGSLLGDDQIYNVVVTAHAFVMIFFMVMPIMIGGFGNWLVPLMIGAPDMAFPRMNNMSFWLLPPSFLLLLASSMVEAGAGTGWTVYPPLAGNLAHAGASVDLTIFSLHLAGVSSILGAINFITTIINMKPPAITQYQTPLFVWSVMITAVLLLLSLPVLAAGITMLLTDRNLNTTFFDPAGGGDPILYQHLFWFFGHPEVYILILPGFGMISHIVTYYSGKKEPFGYMGMVWAMMSIGFLGFIVWAHHMFTVGMDVDTRAYFTSATMIIAIPTGVKVFSWLATLHGGNIKWSPAMLWALGFIFLFTIGGLTGIVLSNSSLDIVLHDTYYVVAHFHYVLSMGAVFAIMGGFVHWFPLFTGYTLNETWAKIHFTIMFVGVNMTFFPQHFLGLAGMPRRYSDYPDAYTTWNTISSMGSFISLTAVILMIFMIWEALASKRLVKSVPLTSTNLEWIYGCPPPFHTFEEPVFIKST</sequence>
<protein>
    <recommendedName>
        <fullName>Cytochrome c oxidase subunit 1</fullName>
        <ecNumber>7.1.1.9</ecNumber>
    </recommendedName>
    <alternativeName>
        <fullName>Cytochrome c oxidase polypeptide I</fullName>
    </alternativeName>
</protein>
<reference key="1">
    <citation type="journal article" date="2004" name="J. Mammal. Evol.">
        <title>DNA data support a rapid radiation of pocket gopher genera.</title>
        <authorList>
            <person name="Spradling T.A."/>
            <person name="Brant S.V."/>
            <person name="Hafner M.S."/>
            <person name="Dickerson C.J."/>
        </authorList>
    </citation>
    <scope>NUCLEOTIDE SEQUENCE [GENOMIC DNA]</scope>
    <source>
        <strain>Isolate LSUMZ M-3076</strain>
        <strain>Isolate MSH1572</strain>
    </source>
</reference>
<geneLocation type="mitochondrion"/>
<proteinExistence type="inferred from homology"/>
<comment type="function">
    <text evidence="3">Component of the cytochrome c oxidase, the last enzyme in the mitochondrial electron transport chain which drives oxidative phosphorylation. The respiratory chain contains 3 multisubunit complexes succinate dehydrogenase (complex II, CII), ubiquinol-cytochrome c oxidoreductase (cytochrome b-c1 complex, complex III, CIII) and cytochrome c oxidase (complex IV, CIV), that cooperate to transfer electrons derived from NADH and succinate to molecular oxygen, creating an electrochemical gradient over the inner membrane that drives transmembrane transport and the ATP synthase. Cytochrome c oxidase is the component of the respiratory chain that catalyzes the reduction of oxygen to water. Electrons originating from reduced cytochrome c in the intermembrane space (IMS) are transferred via the dinuclear copper A center (CU(A)) of subunit 2 and heme A of subunit 1 to the active site in subunit 1, a binuclear center (BNC) formed by heme A3 and copper B (CU(B)). The BNC reduces molecular oxygen to 2 water molecules using 4 electrons from cytochrome c in the IMS and 4 protons from the mitochondrial matrix.</text>
</comment>
<comment type="catalytic activity">
    <reaction evidence="3">
        <text>4 Fe(II)-[cytochrome c] + O2 + 8 H(+)(in) = 4 Fe(III)-[cytochrome c] + 2 H2O + 4 H(+)(out)</text>
        <dbReference type="Rhea" id="RHEA:11436"/>
        <dbReference type="Rhea" id="RHEA-COMP:10350"/>
        <dbReference type="Rhea" id="RHEA-COMP:14399"/>
        <dbReference type="ChEBI" id="CHEBI:15377"/>
        <dbReference type="ChEBI" id="CHEBI:15378"/>
        <dbReference type="ChEBI" id="CHEBI:15379"/>
        <dbReference type="ChEBI" id="CHEBI:29033"/>
        <dbReference type="ChEBI" id="CHEBI:29034"/>
        <dbReference type="EC" id="7.1.1.9"/>
    </reaction>
    <physiologicalReaction direction="left-to-right" evidence="3">
        <dbReference type="Rhea" id="RHEA:11437"/>
    </physiologicalReaction>
</comment>
<comment type="cofactor">
    <cofactor evidence="2">
        <name>heme</name>
        <dbReference type="ChEBI" id="CHEBI:30413"/>
    </cofactor>
    <text evidence="2">Binds 2 heme A groups non-covalently per subunit.</text>
</comment>
<comment type="cofactor">
    <cofactor evidence="2">
        <name>Cu cation</name>
        <dbReference type="ChEBI" id="CHEBI:23378"/>
    </cofactor>
    <text evidence="2">Binds a copper B center.</text>
</comment>
<comment type="pathway">
    <text evidence="3">Energy metabolism; oxidative phosphorylation.</text>
</comment>
<comment type="subunit">
    <text evidence="1 2">Component of the cytochrome c oxidase (complex IV, CIV), a multisubunit enzyme composed of 14 subunits. The complex is composed of a catalytic core of 3 subunits MT-CO1, MT-CO2 and MT-CO3, encoded in the mitochondrial DNA, and 11 supernumerary subunits COX4I, COX5A, COX5B, COX6A, COX6B, COX6C, COX7A, COX7B, COX7C, COX8 and NDUFA4, which are encoded in the nuclear genome. The complex exists as a monomer or a dimer and forms supercomplexes (SCs) in the inner mitochondrial membrane with NADH-ubiquinone oxidoreductase (complex I, CI) and ubiquinol-cytochrome c oxidoreductase (cytochrome b-c1 complex, complex III, CIII), resulting in different assemblies (supercomplex SCI(1)III(2)IV(1) and megacomplex MCI(2)III(2)IV(2)) (By similarity). As a newly synthesized protein, rapidly incorporates into a multi-subunit assembly intermediate in the inner membrane, called MITRAC (mitochondrial translation regulation assembly intermediate of cytochrome c oxidase) complex, whose core components are COA3/MITRAC12 and COX14. Within the MITRAC complex, interacts with COA3 and with SMIM20/MITRAC7; the interaction with SMIM20 stabilizes the newly synthesized MT-CO1 and prevents its premature turnover. Interacts with TMEM177 in a COX20-dependent manner (By similarity).</text>
</comment>
<comment type="subcellular location">
    <subcellularLocation>
        <location evidence="2">Mitochondrion inner membrane</location>
        <topology evidence="2">Multi-pass membrane protein</topology>
    </subcellularLocation>
</comment>
<comment type="similarity">
    <text evidence="4">Belongs to the heme-copper respiratory oxidase family.</text>
</comment>